<organism>
    <name type="scientific">Anas platyrhynchos</name>
    <name type="common">Mallard</name>
    <name type="synonym">Anas boschas</name>
    <dbReference type="NCBI Taxonomy" id="8839"/>
    <lineage>
        <taxon>Eukaryota</taxon>
        <taxon>Metazoa</taxon>
        <taxon>Chordata</taxon>
        <taxon>Craniata</taxon>
        <taxon>Vertebrata</taxon>
        <taxon>Euteleostomi</taxon>
        <taxon>Archelosauria</taxon>
        <taxon>Archosauria</taxon>
        <taxon>Dinosauria</taxon>
        <taxon>Saurischia</taxon>
        <taxon>Theropoda</taxon>
        <taxon>Coelurosauria</taxon>
        <taxon>Aves</taxon>
        <taxon>Neognathae</taxon>
        <taxon>Galloanserae</taxon>
        <taxon>Anseriformes</taxon>
        <taxon>Anatidae</taxon>
        <taxon>Anatinae</taxon>
        <taxon>Anas</taxon>
    </lineage>
</organism>
<comment type="function">
    <text>Protein component of the very low density lipoprotein (VLDL) of egg-laying females. Potent lipoprotein lipase inhibitor, preventing the loss of triglycerides from VLDL on their way from the liver to the growing oocytes.</text>
</comment>
<comment type="subunit">
    <text evidence="1">Monomer.</text>
</comment>
<comment type="tissue specificity">
    <text>Found in egg yolk and in plasma.</text>
</comment>
<comment type="similarity">
    <text evidence="1">Belongs to the apovitellenin family.</text>
</comment>
<reference key="1">
    <citation type="journal article" date="1977" name="FEBS Lett.">
        <title>Determination of the amino acid sequence of apovitellenin I from duck's egg yolk using an improved sequenator procedure: a comparison with other avian species.</title>
        <authorList>
            <person name="Inglis A.S."/>
            <person name="Burley R.W."/>
        </authorList>
    </citation>
    <scope>PROTEIN SEQUENCE</scope>
</reference>
<keyword id="KW-0903">Direct protein sequencing</keyword>
<keyword id="KW-0758">Storage protein</keyword>
<keyword id="KW-0850">VLDL</keyword>
<protein>
    <recommendedName>
        <fullName>Apovitellenin-1</fullName>
    </recommendedName>
    <alternativeName>
        <fullName>Apovitellenin I</fullName>
    </alternativeName>
</protein>
<sequence>KSIFERDRRDWLVIPDAIAAYIYETVNKMSPRVGQFLADAAQTPVVVGTRTFLIRETSKLTLLAEQLMEKIKNLWYTKVLGY</sequence>
<evidence type="ECO:0000305" key="1"/>
<dbReference type="PIR" id="A03102">
    <property type="entry name" value="VLDK1"/>
</dbReference>
<dbReference type="SMR" id="P02658"/>
<dbReference type="Proteomes" id="UP000694400">
    <property type="component" value="Unplaced"/>
</dbReference>
<dbReference type="GO" id="GO:0042627">
    <property type="term" value="C:chylomicron"/>
    <property type="evidence" value="ECO:0007669"/>
    <property type="project" value="InterPro"/>
</dbReference>
<dbReference type="GO" id="GO:0034361">
    <property type="term" value="C:very-low-density lipoprotein particle"/>
    <property type="evidence" value="ECO:0007669"/>
    <property type="project" value="UniProtKB-KW"/>
</dbReference>
<dbReference type="GO" id="GO:0004857">
    <property type="term" value="F:enzyme inhibitor activity"/>
    <property type="evidence" value="ECO:0007669"/>
    <property type="project" value="InterPro"/>
</dbReference>
<dbReference type="GO" id="GO:0045735">
    <property type="term" value="F:nutrient reservoir activity"/>
    <property type="evidence" value="ECO:0007669"/>
    <property type="project" value="UniProtKB-KW"/>
</dbReference>
<dbReference type="GO" id="GO:0006629">
    <property type="term" value="P:lipid metabolic process"/>
    <property type="evidence" value="ECO:0007669"/>
    <property type="project" value="InterPro"/>
</dbReference>
<dbReference type="InterPro" id="IPR008404">
    <property type="entry name" value="Apo-VLDL-II"/>
</dbReference>
<dbReference type="Pfam" id="PF05418">
    <property type="entry name" value="Apo-VLDL-II"/>
    <property type="match status" value="1"/>
</dbReference>
<dbReference type="PIRSF" id="PIRSF002369">
    <property type="entry name" value="Apo-VLDL-II"/>
    <property type="match status" value="1"/>
</dbReference>
<feature type="chain" id="PRO_0000156865" description="Apovitellenin-1">
    <location>
        <begin position="1"/>
        <end position="82"/>
    </location>
</feature>
<accession>P02658</accession>
<name>APOV1_ANAPL</name>
<proteinExistence type="evidence at protein level"/>